<proteinExistence type="inferred from homology"/>
<protein>
    <recommendedName>
        <fullName evidence="2">Small ribosomal subunit protein uS12</fullName>
    </recommendedName>
    <alternativeName>
        <fullName evidence="3">30S ribosomal protein S12</fullName>
    </alternativeName>
</protein>
<comment type="function">
    <text evidence="2">With S4 and S5 plays an important role in translational accuracy.</text>
</comment>
<comment type="function">
    <text evidence="2">Interacts with and stabilizes bases of the 16S rRNA that are involved in tRNA selection in the A site and with the mRNA backbone. Located at the interface of the 30S and 50S subunits, it traverses the body of the 30S subunit contacting proteins on the other side and probably holding the rRNA structure together. The combined cluster of proteins S8, S12 and S17 appears to hold together the shoulder and platform of the 30S subunit.</text>
</comment>
<comment type="subunit">
    <text evidence="2">Part of the 30S ribosomal subunit. Contacts proteins S8 and S17. May interact with IF1 in the 30S initiation complex.</text>
</comment>
<comment type="similarity">
    <text evidence="2">Belongs to the universal ribosomal protein uS12 family.</text>
</comment>
<gene>
    <name evidence="2" type="primary">rpsL</name>
    <name evidence="2" type="synonym">rps12</name>
    <name type="ordered locus">P9211_16341</name>
</gene>
<name>RS12_PROM4</name>
<sequence length="123" mass="13874">MPTIQQLIRTERKRLTRKTKSPALRSCPERRGVCTRVYTSTPKKPNSALRKVARVRLTSGFEVTAYIPGIGHNLQEHSVVLLRGGRVKDLPGVRYHIIRGTLDTAGVKDRRQSRSKYGAKVPK</sequence>
<accession>A9BCK3</accession>
<feature type="chain" id="PRO_1000194208" description="Small ribosomal subunit protein uS12">
    <location>
        <begin position="1"/>
        <end position="123"/>
    </location>
</feature>
<feature type="modified residue" description="3-methylthioaspartic acid" evidence="1">
    <location>
        <position position="89"/>
    </location>
</feature>
<dbReference type="EMBL" id="CP000878">
    <property type="protein sequence ID" value="ABX09565.1"/>
    <property type="molecule type" value="Genomic_DNA"/>
</dbReference>
<dbReference type="RefSeq" id="WP_012196186.1">
    <property type="nucleotide sequence ID" value="NC_009976.1"/>
</dbReference>
<dbReference type="SMR" id="A9BCK3"/>
<dbReference type="STRING" id="93059.P9211_16341"/>
<dbReference type="KEGG" id="pmj:P9211_16341"/>
<dbReference type="eggNOG" id="COG0048">
    <property type="taxonomic scope" value="Bacteria"/>
</dbReference>
<dbReference type="HOGENOM" id="CLU_104295_1_2_3"/>
<dbReference type="OrthoDB" id="9802366at2"/>
<dbReference type="Proteomes" id="UP000000788">
    <property type="component" value="Chromosome"/>
</dbReference>
<dbReference type="GO" id="GO:0015935">
    <property type="term" value="C:small ribosomal subunit"/>
    <property type="evidence" value="ECO:0007669"/>
    <property type="project" value="InterPro"/>
</dbReference>
<dbReference type="GO" id="GO:0019843">
    <property type="term" value="F:rRNA binding"/>
    <property type="evidence" value="ECO:0007669"/>
    <property type="project" value="UniProtKB-UniRule"/>
</dbReference>
<dbReference type="GO" id="GO:0003735">
    <property type="term" value="F:structural constituent of ribosome"/>
    <property type="evidence" value="ECO:0007669"/>
    <property type="project" value="InterPro"/>
</dbReference>
<dbReference type="GO" id="GO:0000049">
    <property type="term" value="F:tRNA binding"/>
    <property type="evidence" value="ECO:0007669"/>
    <property type="project" value="UniProtKB-UniRule"/>
</dbReference>
<dbReference type="GO" id="GO:0006412">
    <property type="term" value="P:translation"/>
    <property type="evidence" value="ECO:0007669"/>
    <property type="project" value="UniProtKB-UniRule"/>
</dbReference>
<dbReference type="CDD" id="cd03368">
    <property type="entry name" value="Ribosomal_S12"/>
    <property type="match status" value="1"/>
</dbReference>
<dbReference type="FunFam" id="2.40.50.140:FF:000001">
    <property type="entry name" value="30S ribosomal protein S12"/>
    <property type="match status" value="1"/>
</dbReference>
<dbReference type="Gene3D" id="2.40.50.140">
    <property type="entry name" value="Nucleic acid-binding proteins"/>
    <property type="match status" value="1"/>
</dbReference>
<dbReference type="HAMAP" id="MF_00403_B">
    <property type="entry name" value="Ribosomal_uS12_B"/>
    <property type="match status" value="1"/>
</dbReference>
<dbReference type="InterPro" id="IPR012340">
    <property type="entry name" value="NA-bd_OB-fold"/>
</dbReference>
<dbReference type="InterPro" id="IPR006032">
    <property type="entry name" value="Ribosomal_uS12"/>
</dbReference>
<dbReference type="InterPro" id="IPR005679">
    <property type="entry name" value="Ribosomal_uS12_bac"/>
</dbReference>
<dbReference type="NCBIfam" id="TIGR00981">
    <property type="entry name" value="rpsL_bact"/>
    <property type="match status" value="1"/>
</dbReference>
<dbReference type="PANTHER" id="PTHR11652">
    <property type="entry name" value="30S RIBOSOMAL PROTEIN S12 FAMILY MEMBER"/>
    <property type="match status" value="1"/>
</dbReference>
<dbReference type="Pfam" id="PF00164">
    <property type="entry name" value="Ribosom_S12_S23"/>
    <property type="match status" value="1"/>
</dbReference>
<dbReference type="PIRSF" id="PIRSF002133">
    <property type="entry name" value="Ribosomal_S12/S23"/>
    <property type="match status" value="1"/>
</dbReference>
<dbReference type="PRINTS" id="PR01034">
    <property type="entry name" value="RIBOSOMALS12"/>
</dbReference>
<dbReference type="SUPFAM" id="SSF50249">
    <property type="entry name" value="Nucleic acid-binding proteins"/>
    <property type="match status" value="1"/>
</dbReference>
<dbReference type="PROSITE" id="PS00055">
    <property type="entry name" value="RIBOSOMAL_S12"/>
    <property type="match status" value="1"/>
</dbReference>
<keyword id="KW-0488">Methylation</keyword>
<keyword id="KW-1185">Reference proteome</keyword>
<keyword id="KW-0687">Ribonucleoprotein</keyword>
<keyword id="KW-0689">Ribosomal protein</keyword>
<keyword id="KW-0694">RNA-binding</keyword>
<keyword id="KW-0699">rRNA-binding</keyword>
<keyword id="KW-0820">tRNA-binding</keyword>
<organism>
    <name type="scientific">Prochlorococcus marinus (strain MIT 9211)</name>
    <dbReference type="NCBI Taxonomy" id="93059"/>
    <lineage>
        <taxon>Bacteria</taxon>
        <taxon>Bacillati</taxon>
        <taxon>Cyanobacteriota</taxon>
        <taxon>Cyanophyceae</taxon>
        <taxon>Synechococcales</taxon>
        <taxon>Prochlorococcaceae</taxon>
        <taxon>Prochlorococcus</taxon>
    </lineage>
</organism>
<evidence type="ECO:0000250" key="1"/>
<evidence type="ECO:0000255" key="2">
    <source>
        <dbReference type="HAMAP-Rule" id="MF_00403"/>
    </source>
</evidence>
<evidence type="ECO:0000305" key="3"/>
<reference key="1">
    <citation type="journal article" date="2007" name="PLoS Genet.">
        <title>Patterns and implications of gene gain and loss in the evolution of Prochlorococcus.</title>
        <authorList>
            <person name="Kettler G.C."/>
            <person name="Martiny A.C."/>
            <person name="Huang K."/>
            <person name="Zucker J."/>
            <person name="Coleman M.L."/>
            <person name="Rodrigue S."/>
            <person name="Chen F."/>
            <person name="Lapidus A."/>
            <person name="Ferriera S."/>
            <person name="Johnson J."/>
            <person name="Steglich C."/>
            <person name="Church G.M."/>
            <person name="Richardson P."/>
            <person name="Chisholm S.W."/>
        </authorList>
    </citation>
    <scope>NUCLEOTIDE SEQUENCE [LARGE SCALE GENOMIC DNA]</scope>
    <source>
        <strain>MIT 9211</strain>
    </source>
</reference>